<proteinExistence type="inferred from homology"/>
<comment type="function">
    <text evidence="1">Catalyzes the last two steps in the biosynthesis of 5-methylaminomethyl-2-thiouridine (mnm(5)s(2)U) at the wobble position (U34) in tRNA. Catalyzes the FAD-dependent demodification of cmnm(5)s(2)U34 to nm(5)s(2)U34, followed by the transfer of a methyl group from S-adenosyl-L-methionine to nm(5)s(2)U34, to form mnm(5)s(2)U34.</text>
</comment>
<comment type="catalytic activity">
    <reaction evidence="1">
        <text>5-aminomethyl-2-thiouridine(34) in tRNA + S-adenosyl-L-methionine = 5-methylaminomethyl-2-thiouridine(34) in tRNA + S-adenosyl-L-homocysteine + H(+)</text>
        <dbReference type="Rhea" id="RHEA:19569"/>
        <dbReference type="Rhea" id="RHEA-COMP:10195"/>
        <dbReference type="Rhea" id="RHEA-COMP:10197"/>
        <dbReference type="ChEBI" id="CHEBI:15378"/>
        <dbReference type="ChEBI" id="CHEBI:57856"/>
        <dbReference type="ChEBI" id="CHEBI:59789"/>
        <dbReference type="ChEBI" id="CHEBI:74454"/>
        <dbReference type="ChEBI" id="CHEBI:74455"/>
        <dbReference type="EC" id="2.1.1.61"/>
    </reaction>
</comment>
<comment type="cofactor">
    <cofactor evidence="1">
        <name>FAD</name>
        <dbReference type="ChEBI" id="CHEBI:57692"/>
    </cofactor>
</comment>
<comment type="subcellular location">
    <subcellularLocation>
        <location evidence="1">Cytoplasm</location>
    </subcellularLocation>
</comment>
<comment type="similarity">
    <text evidence="1">In the N-terminal section; belongs to the methyltransferase superfamily. tRNA (mnm(5)s(2)U34)-methyltransferase family.</text>
</comment>
<comment type="similarity">
    <text evidence="1">In the C-terminal section; belongs to the DAO family.</text>
</comment>
<organism>
    <name type="scientific">Shewanella baltica (strain OS195)</name>
    <dbReference type="NCBI Taxonomy" id="399599"/>
    <lineage>
        <taxon>Bacteria</taxon>
        <taxon>Pseudomonadati</taxon>
        <taxon>Pseudomonadota</taxon>
        <taxon>Gammaproteobacteria</taxon>
        <taxon>Alteromonadales</taxon>
        <taxon>Shewanellaceae</taxon>
        <taxon>Shewanella</taxon>
    </lineage>
</organism>
<evidence type="ECO:0000255" key="1">
    <source>
        <dbReference type="HAMAP-Rule" id="MF_01102"/>
    </source>
</evidence>
<gene>
    <name evidence="1" type="primary">mnmC</name>
    <name type="ordered locus">Sbal195_2841</name>
</gene>
<accession>A9KTV2</accession>
<reference key="1">
    <citation type="submission" date="2007-11" db="EMBL/GenBank/DDBJ databases">
        <title>Complete sequence of chromosome of Shewanella baltica OS195.</title>
        <authorList>
            <consortium name="US DOE Joint Genome Institute"/>
            <person name="Copeland A."/>
            <person name="Lucas S."/>
            <person name="Lapidus A."/>
            <person name="Barry K."/>
            <person name="Glavina del Rio T."/>
            <person name="Dalin E."/>
            <person name="Tice H."/>
            <person name="Pitluck S."/>
            <person name="Chain P."/>
            <person name="Malfatti S."/>
            <person name="Shin M."/>
            <person name="Vergez L."/>
            <person name="Schmutz J."/>
            <person name="Larimer F."/>
            <person name="Land M."/>
            <person name="Hauser L."/>
            <person name="Kyrpides N."/>
            <person name="Kim E."/>
            <person name="Brettar I."/>
            <person name="Rodrigues J."/>
            <person name="Konstantinidis K."/>
            <person name="Klappenbach J."/>
            <person name="Hofle M."/>
            <person name="Tiedje J."/>
            <person name="Richardson P."/>
        </authorList>
    </citation>
    <scope>NUCLEOTIDE SEQUENCE [LARGE SCALE GENOMIC DNA]</scope>
    <source>
        <strain>OS195</strain>
    </source>
</reference>
<protein>
    <recommendedName>
        <fullName evidence="1">tRNA 5-methylaminomethyl-2-thiouridine biosynthesis bifunctional protein MnmC</fullName>
        <shortName evidence="1">tRNA mnm(5)s(2)U biosynthesis bifunctional protein</shortName>
    </recommendedName>
    <domain>
        <recommendedName>
            <fullName evidence="1">tRNA (mnm(5)s(2)U34)-methyltransferase</fullName>
            <ecNumber evidence="1">2.1.1.61</ecNumber>
        </recommendedName>
    </domain>
    <domain>
        <recommendedName>
            <fullName evidence="1">FAD-dependent cmnm(5)s(2)U34 oxidoreductase</fullName>
            <ecNumber evidence="1">1.5.-.-</ecNumber>
        </recommendedName>
    </domain>
</protein>
<dbReference type="EC" id="2.1.1.61" evidence="1"/>
<dbReference type="EC" id="1.5.-.-" evidence="1"/>
<dbReference type="EMBL" id="CP000891">
    <property type="protein sequence ID" value="ABX50007.1"/>
    <property type="molecule type" value="Genomic_DNA"/>
</dbReference>
<dbReference type="RefSeq" id="WP_006085466.1">
    <property type="nucleotide sequence ID" value="NC_009997.1"/>
</dbReference>
<dbReference type="SMR" id="A9KTV2"/>
<dbReference type="KEGG" id="sbn:Sbal195_2841"/>
<dbReference type="HOGENOM" id="CLU_022427_2_1_6"/>
<dbReference type="Proteomes" id="UP000000770">
    <property type="component" value="Chromosome"/>
</dbReference>
<dbReference type="GO" id="GO:0005737">
    <property type="term" value="C:cytoplasm"/>
    <property type="evidence" value="ECO:0007669"/>
    <property type="project" value="UniProtKB-SubCell"/>
</dbReference>
<dbReference type="GO" id="GO:0050660">
    <property type="term" value="F:flavin adenine dinucleotide binding"/>
    <property type="evidence" value="ECO:0007669"/>
    <property type="project" value="UniProtKB-UniRule"/>
</dbReference>
<dbReference type="GO" id="GO:0016645">
    <property type="term" value="F:oxidoreductase activity, acting on the CH-NH group of donors"/>
    <property type="evidence" value="ECO:0007669"/>
    <property type="project" value="InterPro"/>
</dbReference>
<dbReference type="GO" id="GO:0004808">
    <property type="term" value="F:tRNA (5-methylaminomethyl-2-thiouridylate)(34)-methyltransferase activity"/>
    <property type="evidence" value="ECO:0007669"/>
    <property type="project" value="UniProtKB-EC"/>
</dbReference>
<dbReference type="GO" id="GO:0032259">
    <property type="term" value="P:methylation"/>
    <property type="evidence" value="ECO:0007669"/>
    <property type="project" value="UniProtKB-KW"/>
</dbReference>
<dbReference type="GO" id="GO:0002098">
    <property type="term" value="P:tRNA wobble uridine modification"/>
    <property type="evidence" value="ECO:0007669"/>
    <property type="project" value="TreeGrafter"/>
</dbReference>
<dbReference type="Gene3D" id="3.30.9.10">
    <property type="entry name" value="D-Amino Acid Oxidase, subunit A, domain 2"/>
    <property type="match status" value="1"/>
</dbReference>
<dbReference type="Gene3D" id="3.50.50.60">
    <property type="entry name" value="FAD/NAD(P)-binding domain"/>
    <property type="match status" value="1"/>
</dbReference>
<dbReference type="Gene3D" id="3.40.50.150">
    <property type="entry name" value="Vaccinia Virus protein VP39"/>
    <property type="match status" value="1"/>
</dbReference>
<dbReference type="HAMAP" id="MF_01102">
    <property type="entry name" value="MnmC"/>
    <property type="match status" value="1"/>
</dbReference>
<dbReference type="InterPro" id="IPR006076">
    <property type="entry name" value="FAD-dep_OxRdtase"/>
</dbReference>
<dbReference type="InterPro" id="IPR036188">
    <property type="entry name" value="FAD/NAD-bd_sf"/>
</dbReference>
<dbReference type="InterPro" id="IPR029063">
    <property type="entry name" value="SAM-dependent_MTases_sf"/>
</dbReference>
<dbReference type="InterPro" id="IPR023032">
    <property type="entry name" value="tRNA_MAMT_biosynth_bifunc_MnmC"/>
</dbReference>
<dbReference type="InterPro" id="IPR017610">
    <property type="entry name" value="tRNA_S-uridine_synth_MnmC_C"/>
</dbReference>
<dbReference type="NCBIfam" id="TIGR03197">
    <property type="entry name" value="MnmC_Cterm"/>
    <property type="match status" value="1"/>
</dbReference>
<dbReference type="PANTHER" id="PTHR13847">
    <property type="entry name" value="SARCOSINE DEHYDROGENASE-RELATED"/>
    <property type="match status" value="1"/>
</dbReference>
<dbReference type="PANTHER" id="PTHR13847:SF283">
    <property type="entry name" value="TRNA 5-METHYLAMINOMETHYL-2-THIOURIDINE BIOSYNTHESIS BIFUNCTIONAL PROTEIN MNMC"/>
    <property type="match status" value="1"/>
</dbReference>
<dbReference type="Pfam" id="PF01266">
    <property type="entry name" value="DAO"/>
    <property type="match status" value="1"/>
</dbReference>
<dbReference type="SUPFAM" id="SSF51905">
    <property type="entry name" value="FAD/NAD(P)-binding domain"/>
    <property type="match status" value="1"/>
</dbReference>
<feature type="chain" id="PRO_0000348025" description="tRNA 5-methylaminomethyl-2-thiouridine biosynthesis bifunctional protein MnmC">
    <location>
        <begin position="1"/>
        <end position="708"/>
    </location>
</feature>
<feature type="region of interest" description="tRNA (mnm(5)s(2)U34)-methyltransferase">
    <location>
        <begin position="1"/>
        <end position="278"/>
    </location>
</feature>
<feature type="region of interest" description="FAD-dependent cmnm(5)s(2)U34 oxidoreductase">
    <location>
        <begin position="301"/>
        <end position="708"/>
    </location>
</feature>
<keyword id="KW-0963">Cytoplasm</keyword>
<keyword id="KW-0274">FAD</keyword>
<keyword id="KW-0285">Flavoprotein</keyword>
<keyword id="KW-0489">Methyltransferase</keyword>
<keyword id="KW-0511">Multifunctional enzyme</keyword>
<keyword id="KW-0560">Oxidoreductase</keyword>
<keyword id="KW-0949">S-adenosyl-L-methionine</keyword>
<keyword id="KW-0808">Transferase</keyword>
<keyword id="KW-0819">tRNA processing</keyword>
<name>MNMC_SHEB9</name>
<sequence>MTAEPNKPCQIKRDYQQLINLYPATAHTDAHYLSKLSIYQQRVFEAHSQQKLLILGQIGLGNGLELLSWWRTQANPSQRLLLKVFEPNPINAYELKSLWDQSLTLVKETPFEPHLESKQASALECKSKLSQLAQTLLDAEPTAIIGCQRLIFDDGRTTIDLHFGDIQTQLSSLTHSPMHPVQHWLILPHLLQALYHQSQWQMAKLSDDSATIATIGLSESSELSETTVNRFQACGFTVSDINELGTKALGIHQPVTLINHQPDAVLLHERQVLRQQDAKAYAFNPMAAILSSPTQSSIAIIGGGLASAHLTLSLAERGQGAQVFCKDAELGQGASGNRQGAIYPLLTTENDELSRFFQQAFLFSRRRVQALTSAPADNQTPISHNFCGVLQTAHDERSQLRLDKIIQGQPWPSEIAYAVDAEQANAIAKINLDKPGFFYPLGGWVCPFEYADAAIQKAMQLADVSVSLNTDILAIERQADGWVLLTEKERFGPFAQLVLANGAELTQFDASNKLQISPFRGQVSHVPAQFQLSQLATVLCANGYLTPSHQGLHCLGASYVKEPEHLDFCSQEQQENLMKMHESYPNQSWLEDIDMSGNNARIGVRMVTRDHFPMMGCAPDVAKILEDYEQHQLTKESRHYWQTTPAPVHQGLYILGGLGSRGLSSGPLAAECLAAQLCGEPIPLDKETLCKLNPNRMWLRKLLKGKAL</sequence>